<keyword id="KW-0414">Isoprene biosynthesis</keyword>
<keyword id="KW-0460">Magnesium</keyword>
<keyword id="KW-0479">Metal-binding</keyword>
<keyword id="KW-1185">Reference proteome</keyword>
<keyword id="KW-0808">Transferase</keyword>
<comment type="function">
    <text evidence="3 4 7">Geranylgeranyl pyrophosphate synthase; part of the gene cluster that mediates the biosynthesis of the diterpene ent-pimara-8(14),15-diene (PD) (PubMed:22506079, PubMed:27098256). Within the cluster, the HMG-CoA reductase AN1593 functions in the mevalonate pathway, which produces isoprenoid precursors (PubMed:22506079, PubMed:27098256). The geranylgeranyl pyrophosphate (GGPP) synthase AN1592 is needed in the formation of GGPP, the precursor for diterpenes (PubMed:22506079, PubMed:27098256). Lastly, the pimaradiene synthase pbcA performs the 2 cyclization steps that convert GGPP to ent-pimara-8(14),15-diene (PubMed:22506079, PubMed:27098256). The putative roles of the remaining cluster enzymes in ent-pimara-8(14),15-diene biosynthesis is unclear (Probable). The cytochrome P450 monooxygenase AN1598, the glutathione S-transferase AN1595, the oxidoreductases AN1596 and AN1597 probably function as decorative enzymes (Probable). It is possible that in biological conditions the compound is oxidized to ent-pimara-8(14),15-dien-19-oic acid, which is a bioactive diterpene compound predominant in many plant extracts (Probable).</text>
</comment>
<comment type="catalytic activity">
    <reaction evidence="1">
        <text>isopentenyl diphosphate + dimethylallyl diphosphate = (2E)-geranyl diphosphate + diphosphate</text>
        <dbReference type="Rhea" id="RHEA:22408"/>
        <dbReference type="ChEBI" id="CHEBI:33019"/>
        <dbReference type="ChEBI" id="CHEBI:57623"/>
        <dbReference type="ChEBI" id="CHEBI:58057"/>
        <dbReference type="ChEBI" id="CHEBI:128769"/>
        <dbReference type="EC" id="2.5.1.1"/>
    </reaction>
</comment>
<comment type="catalytic activity">
    <reaction evidence="1">
        <text>isopentenyl diphosphate + (2E)-geranyl diphosphate = (2E,6E)-farnesyl diphosphate + diphosphate</text>
        <dbReference type="Rhea" id="RHEA:19361"/>
        <dbReference type="ChEBI" id="CHEBI:33019"/>
        <dbReference type="ChEBI" id="CHEBI:58057"/>
        <dbReference type="ChEBI" id="CHEBI:128769"/>
        <dbReference type="ChEBI" id="CHEBI:175763"/>
        <dbReference type="EC" id="2.5.1.10"/>
    </reaction>
</comment>
<comment type="catalytic activity">
    <reaction evidence="1">
        <text>isopentenyl diphosphate + (2E,6E)-farnesyl diphosphate = (2E,6E,10E)-geranylgeranyl diphosphate + diphosphate</text>
        <dbReference type="Rhea" id="RHEA:17653"/>
        <dbReference type="ChEBI" id="CHEBI:33019"/>
        <dbReference type="ChEBI" id="CHEBI:58756"/>
        <dbReference type="ChEBI" id="CHEBI:128769"/>
        <dbReference type="ChEBI" id="CHEBI:175763"/>
        <dbReference type="EC" id="2.5.1.29"/>
    </reaction>
</comment>
<comment type="cofactor">
    <cofactor evidence="1">
        <name>Mg(2+)</name>
        <dbReference type="ChEBI" id="CHEBI:18420"/>
    </cofactor>
    <text evidence="1">Binds 3 Mg(2+) ions per subunit.</text>
</comment>
<comment type="pathway">
    <text evidence="7">Secondary metabolite biosynthesis; terpenoid biosynthesis.</text>
</comment>
<comment type="induction">
    <text evidence="3 4">Expression is positively regulated by the cluster-specific transcription factor pbcR.</text>
</comment>
<comment type="similarity">
    <text evidence="6">Belongs to the FPP/GGPP synthase family.</text>
</comment>
<protein>
    <recommendedName>
        <fullName evidence="5">Geranylgeranyl pyrophosphate synthase AN1592</fullName>
        <shortName evidence="6">GGPP synthase</shortName>
        <shortName evidence="6">GGPPSase</shortName>
        <ecNumber evidence="7">2.5.1.-</ecNumber>
    </recommendedName>
    <alternativeName>
        <fullName evidence="1">(2E,6E)-farnesyl diphosphate synthase</fullName>
    </alternativeName>
    <alternativeName>
        <fullName evidence="1">Dimethylallyltranstransferase</fullName>
        <ecNumber evidence="1">2.5.1.1</ecNumber>
    </alternativeName>
    <alternativeName>
        <fullName evidence="1">Farnesyl diphosphate synthase</fullName>
    </alternativeName>
    <alternativeName>
        <fullName evidence="1">Farnesyltranstransferase</fullName>
        <ecNumber evidence="1">2.5.1.29</ecNumber>
    </alternativeName>
    <alternativeName>
        <fullName evidence="1">Geranylgeranyl diphosphate synthase</fullName>
    </alternativeName>
    <alternativeName>
        <fullName evidence="1">Geranyltranstransferase</fullName>
        <ecNumber evidence="1">2.5.1.10</ecNumber>
    </alternativeName>
    <alternativeName>
        <fullName evidence="5">Pimaradiene biosynthesis cluster protein AN1592</fullName>
    </alternativeName>
</protein>
<accession>A0A1U8QLG8</accession>
<accession>C8VN85</accession>
<accession>Q5BCY8</accession>
<reference key="1">
    <citation type="journal article" date="2005" name="Nature">
        <title>Sequencing of Aspergillus nidulans and comparative analysis with A. fumigatus and A. oryzae.</title>
        <authorList>
            <person name="Galagan J.E."/>
            <person name="Calvo S.E."/>
            <person name="Cuomo C."/>
            <person name="Ma L.-J."/>
            <person name="Wortman J.R."/>
            <person name="Batzoglou S."/>
            <person name="Lee S.-I."/>
            <person name="Bastuerkmen M."/>
            <person name="Spevak C.C."/>
            <person name="Clutterbuck J."/>
            <person name="Kapitonov V."/>
            <person name="Jurka J."/>
            <person name="Scazzocchio C."/>
            <person name="Farman M.L."/>
            <person name="Butler J."/>
            <person name="Purcell S."/>
            <person name="Harris S."/>
            <person name="Braus G.H."/>
            <person name="Draht O."/>
            <person name="Busch S."/>
            <person name="D'Enfert C."/>
            <person name="Bouchier C."/>
            <person name="Goldman G.H."/>
            <person name="Bell-Pedersen D."/>
            <person name="Griffiths-Jones S."/>
            <person name="Doonan J.H."/>
            <person name="Yu J."/>
            <person name="Vienken K."/>
            <person name="Pain A."/>
            <person name="Freitag M."/>
            <person name="Selker E.U."/>
            <person name="Archer D.B."/>
            <person name="Penalva M.A."/>
            <person name="Oakley B.R."/>
            <person name="Momany M."/>
            <person name="Tanaka T."/>
            <person name="Kumagai T."/>
            <person name="Asai K."/>
            <person name="Machida M."/>
            <person name="Nierman W.C."/>
            <person name="Denning D.W."/>
            <person name="Caddick M.X."/>
            <person name="Hynes M."/>
            <person name="Paoletti M."/>
            <person name="Fischer R."/>
            <person name="Miller B.L."/>
            <person name="Dyer P.S."/>
            <person name="Sachs M.S."/>
            <person name="Osmani S.A."/>
            <person name="Birren B.W."/>
        </authorList>
    </citation>
    <scope>NUCLEOTIDE SEQUENCE [LARGE SCALE GENOMIC DNA]</scope>
    <source>
        <strain>FGSC A4 / ATCC 38163 / CBS 112.46 / NRRL 194 / M139</strain>
    </source>
</reference>
<reference key="2">
    <citation type="journal article" date="2009" name="Fungal Genet. Biol.">
        <title>The 2008 update of the Aspergillus nidulans genome annotation: a community effort.</title>
        <authorList>
            <person name="Wortman J.R."/>
            <person name="Gilsenan J.M."/>
            <person name="Joardar V."/>
            <person name="Deegan J."/>
            <person name="Clutterbuck J."/>
            <person name="Andersen M.R."/>
            <person name="Archer D."/>
            <person name="Bencina M."/>
            <person name="Braus G."/>
            <person name="Coutinho P."/>
            <person name="von Dohren H."/>
            <person name="Doonan J."/>
            <person name="Driessen A.J."/>
            <person name="Durek P."/>
            <person name="Espeso E."/>
            <person name="Fekete E."/>
            <person name="Flipphi M."/>
            <person name="Estrada C.G."/>
            <person name="Geysens S."/>
            <person name="Goldman G."/>
            <person name="de Groot P.W."/>
            <person name="Hansen K."/>
            <person name="Harris S.D."/>
            <person name="Heinekamp T."/>
            <person name="Helmstaedt K."/>
            <person name="Henrissat B."/>
            <person name="Hofmann G."/>
            <person name="Homan T."/>
            <person name="Horio T."/>
            <person name="Horiuchi H."/>
            <person name="James S."/>
            <person name="Jones M."/>
            <person name="Karaffa L."/>
            <person name="Karanyi Z."/>
            <person name="Kato M."/>
            <person name="Keller N."/>
            <person name="Kelly D.E."/>
            <person name="Kiel J.A."/>
            <person name="Kim J.M."/>
            <person name="van der Klei I.J."/>
            <person name="Klis F.M."/>
            <person name="Kovalchuk A."/>
            <person name="Krasevec N."/>
            <person name="Kubicek C.P."/>
            <person name="Liu B."/>
            <person name="Maccabe A."/>
            <person name="Meyer V."/>
            <person name="Mirabito P."/>
            <person name="Miskei M."/>
            <person name="Mos M."/>
            <person name="Mullins J."/>
            <person name="Nelson D.R."/>
            <person name="Nielsen J."/>
            <person name="Oakley B.R."/>
            <person name="Osmani S.A."/>
            <person name="Pakula T."/>
            <person name="Paszewski A."/>
            <person name="Paulsen I."/>
            <person name="Pilsyk S."/>
            <person name="Pocsi I."/>
            <person name="Punt P.J."/>
            <person name="Ram A.F."/>
            <person name="Ren Q."/>
            <person name="Robellet X."/>
            <person name="Robson G."/>
            <person name="Seiboth B."/>
            <person name="van Solingen P."/>
            <person name="Specht T."/>
            <person name="Sun J."/>
            <person name="Taheri-Talesh N."/>
            <person name="Takeshita N."/>
            <person name="Ussery D."/>
            <person name="vanKuyk P.A."/>
            <person name="Visser H."/>
            <person name="van de Vondervoort P.J."/>
            <person name="de Vries R.P."/>
            <person name="Walton J."/>
            <person name="Xiang X."/>
            <person name="Xiong Y."/>
            <person name="Zeng A.P."/>
            <person name="Brandt B.W."/>
            <person name="Cornell M.J."/>
            <person name="van den Hondel C.A."/>
            <person name="Visser J."/>
            <person name="Oliver S.G."/>
            <person name="Turner G."/>
        </authorList>
    </citation>
    <scope>GENOME REANNOTATION</scope>
    <source>
        <strain>FGSC A4 / ATCC 38163 / CBS 112.46 / NRRL 194 / M139</strain>
    </source>
</reference>
<reference key="3">
    <citation type="journal article" date="2012" name="PLoS ONE">
        <title>Identification and characterization of a novel diterpene gene cluster in Aspergillus nidulans.</title>
        <authorList>
            <person name="Bromann K."/>
            <person name="Toivari M."/>
            <person name="Viljanen K."/>
            <person name="Vuoristo A."/>
            <person name="Ruohonen L."/>
            <person name="Nakari-Setaelae T."/>
        </authorList>
    </citation>
    <scope>FUNCTION</scope>
    <scope>INDUCTION</scope>
    <scope>PATHWAY</scope>
</reference>
<reference key="4">
    <citation type="journal article" date="2016" name="Appl. Microbiol. Biotechnol.">
        <title>Engineering Aspergillus nidulans for heterologous ent-kaurene and gamma-terpinene production.</title>
        <authorList>
            <person name="Bromann K."/>
            <person name="Toivari M."/>
            <person name="Viljanen K."/>
            <person name="Ruohonen L."/>
            <person name="Nakari-Setaelae T."/>
        </authorList>
    </citation>
    <scope>FUNCTION</scope>
    <scope>INDUCTION</scope>
</reference>
<organism>
    <name type="scientific">Emericella nidulans (strain FGSC A4 / ATCC 38163 / CBS 112.46 / NRRL 194 / M139)</name>
    <name type="common">Aspergillus nidulans</name>
    <dbReference type="NCBI Taxonomy" id="227321"/>
    <lineage>
        <taxon>Eukaryota</taxon>
        <taxon>Fungi</taxon>
        <taxon>Dikarya</taxon>
        <taxon>Ascomycota</taxon>
        <taxon>Pezizomycotina</taxon>
        <taxon>Eurotiomycetes</taxon>
        <taxon>Eurotiomycetidae</taxon>
        <taxon>Eurotiales</taxon>
        <taxon>Aspergillaceae</taxon>
        <taxon>Aspergillus</taxon>
        <taxon>Aspergillus subgen. Nidulantes</taxon>
    </lineage>
</organism>
<gene>
    <name type="ORF">AN1592</name>
    <name type="ORF">ANIA_01592</name>
</gene>
<proteinExistence type="evidence at transcript level"/>
<name>PBCB_EMENI</name>
<sequence>MSPPLDSALEPLSEYKETAFPRTEKDPSQYKEHDLVTPEKEIQTGYFSPRGSHSSHGSHDSSASSNISLDDARMSDVNNSPNVFHDDPDTIDEKLSMYWKAANETVIREPYDYIAGIPGKEIRRKLLEAFNHWYKVDEQSCQAIATTVGMAHNASLLIDDIQDSSKLRRGVPCAHEVFGIAQTINSANYVYFLAQNQLFRLRSWPQAISVFNEEMVNLHRGQGMELFWRDNLLPPSMDDYLQMIANKTGGLFRMIVRLLQTSSRQVIDVEQLVDVLGLYFQILDDYKNIREEKMAAQKGFFEDLTEGKFSFPICHAIGEGAKNRTALLHMLRLKTDDMKIKQEAVCILDNAGSLDYTREVLYGLDRKARSLLREFKTPNPFMEALLDAMLSSLQACH</sequence>
<dbReference type="EC" id="2.5.1.-" evidence="7"/>
<dbReference type="EC" id="2.5.1.1" evidence="1"/>
<dbReference type="EC" id="2.5.1.29" evidence="1"/>
<dbReference type="EC" id="2.5.1.10" evidence="1"/>
<dbReference type="EMBL" id="AACD01000025">
    <property type="protein sequence ID" value="EAA64299.1"/>
    <property type="molecule type" value="Genomic_DNA"/>
</dbReference>
<dbReference type="EMBL" id="BN001307">
    <property type="protein sequence ID" value="CBF85177.1"/>
    <property type="molecule type" value="Genomic_DNA"/>
</dbReference>
<dbReference type="RefSeq" id="XP_659196.1">
    <property type="nucleotide sequence ID" value="XM_654104.1"/>
</dbReference>
<dbReference type="SMR" id="A0A1U8QLG8"/>
<dbReference type="FunCoup" id="A0A1U8QLG8">
    <property type="interactions" value="451"/>
</dbReference>
<dbReference type="STRING" id="227321.Q5BCY8"/>
<dbReference type="EnsemblFungi" id="CBF85177">
    <property type="protein sequence ID" value="CBF85177"/>
    <property type="gene ID" value="ANIA_01592"/>
</dbReference>
<dbReference type="GeneID" id="2875291"/>
<dbReference type="KEGG" id="ani:ANIA_01592"/>
<dbReference type="VEuPathDB" id="FungiDB:AN1592"/>
<dbReference type="eggNOG" id="KOG0777">
    <property type="taxonomic scope" value="Eukaryota"/>
</dbReference>
<dbReference type="HOGENOM" id="CLU_014015_6_0_1"/>
<dbReference type="InParanoid" id="A0A1U8QLG8"/>
<dbReference type="OMA" id="LISHAVW"/>
<dbReference type="OrthoDB" id="6921389at2759"/>
<dbReference type="UniPathway" id="UPA00213"/>
<dbReference type="Proteomes" id="UP000000560">
    <property type="component" value="Chromosome VII"/>
</dbReference>
<dbReference type="GO" id="GO:0004337">
    <property type="term" value="F:(2E,6E)-farnesyl diphosphate synthase activity"/>
    <property type="evidence" value="ECO:0007669"/>
    <property type="project" value="UniProtKB-EC"/>
</dbReference>
<dbReference type="GO" id="GO:0004161">
    <property type="term" value="F:dimethylallyltranstransferase activity"/>
    <property type="evidence" value="ECO:0007669"/>
    <property type="project" value="UniProtKB-EC"/>
</dbReference>
<dbReference type="GO" id="GO:0004311">
    <property type="term" value="F:geranylgeranyl diphosphate synthase activity"/>
    <property type="evidence" value="ECO:0000318"/>
    <property type="project" value="GO_Central"/>
</dbReference>
<dbReference type="GO" id="GO:0046872">
    <property type="term" value="F:metal ion binding"/>
    <property type="evidence" value="ECO:0007669"/>
    <property type="project" value="UniProtKB-KW"/>
</dbReference>
<dbReference type="GO" id="GO:0046165">
    <property type="term" value="P:alcohol biosynthetic process"/>
    <property type="evidence" value="ECO:0007669"/>
    <property type="project" value="UniProtKB-ARBA"/>
</dbReference>
<dbReference type="GO" id="GO:0008299">
    <property type="term" value="P:isoprenoid biosynthetic process"/>
    <property type="evidence" value="ECO:0000318"/>
    <property type="project" value="GO_Central"/>
</dbReference>
<dbReference type="GO" id="GO:0043386">
    <property type="term" value="P:mycotoxin biosynthetic process"/>
    <property type="evidence" value="ECO:0007669"/>
    <property type="project" value="UniProtKB-ARBA"/>
</dbReference>
<dbReference type="GO" id="GO:0016114">
    <property type="term" value="P:terpenoid biosynthetic process"/>
    <property type="evidence" value="ECO:0007669"/>
    <property type="project" value="UniProtKB-UniPathway"/>
</dbReference>
<dbReference type="CDD" id="cd00685">
    <property type="entry name" value="Trans_IPPS_HT"/>
    <property type="match status" value="1"/>
</dbReference>
<dbReference type="FunFam" id="1.10.600.10:FF:000030">
    <property type="entry name" value="Geranylgeranyl pyrophosphate synthase"/>
    <property type="match status" value="1"/>
</dbReference>
<dbReference type="Gene3D" id="1.10.600.10">
    <property type="entry name" value="Farnesyl Diphosphate Synthase"/>
    <property type="match status" value="1"/>
</dbReference>
<dbReference type="InterPro" id="IPR008949">
    <property type="entry name" value="Isoprenoid_synthase_dom_sf"/>
</dbReference>
<dbReference type="InterPro" id="IPR000092">
    <property type="entry name" value="Polyprenyl_synt"/>
</dbReference>
<dbReference type="InterPro" id="IPR033749">
    <property type="entry name" value="Polyprenyl_synt_CS"/>
</dbReference>
<dbReference type="PANTHER" id="PTHR12001">
    <property type="entry name" value="GERANYLGERANYL PYROPHOSPHATE SYNTHASE"/>
    <property type="match status" value="1"/>
</dbReference>
<dbReference type="PANTHER" id="PTHR12001:SF44">
    <property type="entry name" value="GERANYLGERANYL PYROPHOSPHATE SYNTHASE"/>
    <property type="match status" value="1"/>
</dbReference>
<dbReference type="Pfam" id="PF00348">
    <property type="entry name" value="polyprenyl_synt"/>
    <property type="match status" value="1"/>
</dbReference>
<dbReference type="SFLD" id="SFLDS00005">
    <property type="entry name" value="Isoprenoid_Synthase_Type_I"/>
    <property type="match status" value="1"/>
</dbReference>
<dbReference type="SUPFAM" id="SSF48576">
    <property type="entry name" value="Terpenoid synthases"/>
    <property type="match status" value="1"/>
</dbReference>
<dbReference type="PROSITE" id="PS00723">
    <property type="entry name" value="POLYPRENYL_SYNTHASE_1"/>
    <property type="match status" value="1"/>
</dbReference>
<dbReference type="PROSITE" id="PS00444">
    <property type="entry name" value="POLYPRENYL_SYNTHASE_2"/>
    <property type="match status" value="1"/>
</dbReference>
<evidence type="ECO:0000250" key="1">
    <source>
        <dbReference type="UniProtKB" id="Q12051"/>
    </source>
</evidence>
<evidence type="ECO:0000256" key="2">
    <source>
        <dbReference type="SAM" id="MobiDB-lite"/>
    </source>
</evidence>
<evidence type="ECO:0000269" key="3">
    <source>
    </source>
</evidence>
<evidence type="ECO:0000269" key="4">
    <source>
    </source>
</evidence>
<evidence type="ECO:0000303" key="5">
    <source>
    </source>
</evidence>
<evidence type="ECO:0000305" key="6"/>
<evidence type="ECO:0000305" key="7">
    <source>
    </source>
</evidence>
<feature type="chain" id="PRO_0000450840" description="Geranylgeranyl pyrophosphate synthase AN1592">
    <location>
        <begin position="1"/>
        <end position="397"/>
    </location>
</feature>
<feature type="region of interest" description="Disordered" evidence="2">
    <location>
        <begin position="1"/>
        <end position="67"/>
    </location>
</feature>
<feature type="compositionally biased region" description="Basic and acidic residues" evidence="2">
    <location>
        <begin position="13"/>
        <end position="42"/>
    </location>
</feature>
<feature type="compositionally biased region" description="Low complexity" evidence="2">
    <location>
        <begin position="52"/>
        <end position="67"/>
    </location>
</feature>
<feature type="binding site" evidence="1">
    <location>
        <position position="120"/>
    </location>
    <ligand>
        <name>isopentenyl diphosphate</name>
        <dbReference type="ChEBI" id="CHEBI:128769"/>
    </ligand>
</feature>
<feature type="binding site" evidence="1">
    <location>
        <position position="123"/>
    </location>
    <ligand>
        <name>isopentenyl diphosphate</name>
        <dbReference type="ChEBI" id="CHEBI:128769"/>
    </ligand>
</feature>
<feature type="binding site" evidence="1">
    <location>
        <position position="152"/>
    </location>
    <ligand>
        <name>isopentenyl diphosphate</name>
        <dbReference type="ChEBI" id="CHEBI:128769"/>
    </ligand>
</feature>
<feature type="binding site" evidence="1">
    <location>
        <position position="159"/>
    </location>
    <ligand>
        <name>Mg(2+)</name>
        <dbReference type="ChEBI" id="CHEBI:18420"/>
        <label>1</label>
    </ligand>
</feature>
<feature type="binding site" evidence="1">
    <location>
        <position position="159"/>
    </location>
    <ligand>
        <name>Mg(2+)</name>
        <dbReference type="ChEBI" id="CHEBI:18420"/>
        <label>2</label>
    </ligand>
</feature>
<feature type="binding site" evidence="1">
    <location>
        <position position="163"/>
    </location>
    <ligand>
        <name>Mg(2+)</name>
        <dbReference type="ChEBI" id="CHEBI:18420"/>
        <label>1</label>
    </ligand>
</feature>
<feature type="binding site" evidence="1">
    <location>
        <position position="163"/>
    </location>
    <ligand>
        <name>Mg(2+)</name>
        <dbReference type="ChEBI" id="CHEBI:18420"/>
        <label>2</label>
    </ligand>
</feature>
<feature type="binding site" evidence="1">
    <location>
        <position position="168"/>
    </location>
    <ligand>
        <name>dimethylallyl diphosphate</name>
        <dbReference type="ChEBI" id="CHEBI:57623"/>
    </ligand>
</feature>
<feature type="binding site" evidence="1">
    <location>
        <position position="169"/>
    </location>
    <ligand>
        <name>isopentenyl diphosphate</name>
        <dbReference type="ChEBI" id="CHEBI:128769"/>
    </ligand>
</feature>
<feature type="binding site" evidence="1">
    <location>
        <position position="247"/>
    </location>
    <ligand>
        <name>dimethylallyl diphosphate</name>
        <dbReference type="ChEBI" id="CHEBI:57623"/>
    </ligand>
</feature>
<feature type="binding site" evidence="1">
    <location>
        <position position="248"/>
    </location>
    <ligand>
        <name>dimethylallyl diphosphate</name>
        <dbReference type="ChEBI" id="CHEBI:57623"/>
    </ligand>
</feature>
<feature type="binding site" evidence="1">
    <location>
        <position position="281"/>
    </location>
    <ligand>
        <name>dimethylallyl diphosphate</name>
        <dbReference type="ChEBI" id="CHEBI:57623"/>
    </ligand>
</feature>
<feature type="binding site" evidence="1">
    <location>
        <position position="284"/>
    </location>
    <ligand>
        <name>Mg(2+)</name>
        <dbReference type="ChEBI" id="CHEBI:18420"/>
        <label>3</label>
    </ligand>
</feature>
<feature type="binding site" evidence="1">
    <location>
        <position position="288"/>
    </location>
    <ligand>
        <name>dimethylallyl diphosphate</name>
        <dbReference type="ChEBI" id="CHEBI:57623"/>
    </ligand>
</feature>
<feature type="binding site" evidence="1">
    <location>
        <position position="298"/>
    </location>
    <ligand>
        <name>dimethylallyl diphosphate</name>
        <dbReference type="ChEBI" id="CHEBI:57623"/>
    </ligand>
</feature>
<feature type="binding site" evidence="1">
    <location>
        <position position="308"/>
    </location>
    <ligand>
        <name>dimethylallyl diphosphate</name>
        <dbReference type="ChEBI" id="CHEBI:57623"/>
    </ligand>
</feature>
<feature type="site" description="Important for determining product chain length" evidence="1">
    <location>
        <position position="191"/>
    </location>
</feature>